<proteinExistence type="inferred from homology"/>
<evidence type="ECO:0000255" key="1">
    <source>
        <dbReference type="HAMAP-Rule" id="MF_00042"/>
    </source>
</evidence>
<evidence type="ECO:0000255" key="2">
    <source>
        <dbReference type="PROSITE-ProRule" id="PRU00408"/>
    </source>
</evidence>
<reference key="1">
    <citation type="submission" date="2008-01" db="EMBL/GenBank/DDBJ databases">
        <title>Complete sequence of chromosome of Caulobacter sp. K31.</title>
        <authorList>
            <consortium name="US DOE Joint Genome Institute"/>
            <person name="Copeland A."/>
            <person name="Lucas S."/>
            <person name="Lapidus A."/>
            <person name="Barry K."/>
            <person name="Glavina del Rio T."/>
            <person name="Dalin E."/>
            <person name="Tice H."/>
            <person name="Pitluck S."/>
            <person name="Bruce D."/>
            <person name="Goodwin L."/>
            <person name="Thompson L.S."/>
            <person name="Brettin T."/>
            <person name="Detter J.C."/>
            <person name="Han C."/>
            <person name="Schmutz J."/>
            <person name="Larimer F."/>
            <person name="Land M."/>
            <person name="Hauser L."/>
            <person name="Kyrpides N."/>
            <person name="Kim E."/>
            <person name="Stephens C."/>
            <person name="Richardson P."/>
        </authorList>
    </citation>
    <scope>NUCLEOTIDE SEQUENCE [LARGE SCALE GENOMIC DNA]</scope>
    <source>
        <strain>K31</strain>
    </source>
</reference>
<gene>
    <name evidence="1" type="primary">rnhA</name>
    <name type="ordered locus">Caul_4395</name>
</gene>
<organism>
    <name type="scientific">Caulobacter sp. (strain K31)</name>
    <dbReference type="NCBI Taxonomy" id="366602"/>
    <lineage>
        <taxon>Bacteria</taxon>
        <taxon>Pseudomonadati</taxon>
        <taxon>Pseudomonadota</taxon>
        <taxon>Alphaproteobacteria</taxon>
        <taxon>Caulobacterales</taxon>
        <taxon>Caulobacteraceae</taxon>
        <taxon>Caulobacter</taxon>
    </lineage>
</organism>
<protein>
    <recommendedName>
        <fullName evidence="1">Ribonuclease H</fullName>
        <shortName evidence="1">RNase H</shortName>
        <ecNumber evidence="1">3.1.26.4</ecNumber>
    </recommendedName>
</protein>
<dbReference type="EC" id="3.1.26.4" evidence="1"/>
<dbReference type="EMBL" id="CP000927">
    <property type="protein sequence ID" value="ABZ73515.1"/>
    <property type="molecule type" value="Genomic_DNA"/>
</dbReference>
<dbReference type="SMR" id="B0T025"/>
<dbReference type="STRING" id="366602.Caul_4395"/>
<dbReference type="KEGG" id="cak:Caul_4395"/>
<dbReference type="eggNOG" id="COG0328">
    <property type="taxonomic scope" value="Bacteria"/>
</dbReference>
<dbReference type="HOGENOM" id="CLU_030894_6_0_5"/>
<dbReference type="OrthoDB" id="7845843at2"/>
<dbReference type="GO" id="GO:0005737">
    <property type="term" value="C:cytoplasm"/>
    <property type="evidence" value="ECO:0007669"/>
    <property type="project" value="UniProtKB-SubCell"/>
</dbReference>
<dbReference type="GO" id="GO:0000287">
    <property type="term" value="F:magnesium ion binding"/>
    <property type="evidence" value="ECO:0007669"/>
    <property type="project" value="UniProtKB-UniRule"/>
</dbReference>
<dbReference type="GO" id="GO:0003676">
    <property type="term" value="F:nucleic acid binding"/>
    <property type="evidence" value="ECO:0007669"/>
    <property type="project" value="InterPro"/>
</dbReference>
<dbReference type="GO" id="GO:0004523">
    <property type="term" value="F:RNA-DNA hybrid ribonuclease activity"/>
    <property type="evidence" value="ECO:0007669"/>
    <property type="project" value="UniProtKB-UniRule"/>
</dbReference>
<dbReference type="GO" id="GO:0043137">
    <property type="term" value="P:DNA replication, removal of RNA primer"/>
    <property type="evidence" value="ECO:0007669"/>
    <property type="project" value="TreeGrafter"/>
</dbReference>
<dbReference type="CDD" id="cd09278">
    <property type="entry name" value="RNase_HI_prokaryote_like"/>
    <property type="match status" value="1"/>
</dbReference>
<dbReference type="FunFam" id="3.30.420.10:FF:000089">
    <property type="entry name" value="Ribonuclease H"/>
    <property type="match status" value="1"/>
</dbReference>
<dbReference type="Gene3D" id="3.30.420.10">
    <property type="entry name" value="Ribonuclease H-like superfamily/Ribonuclease H"/>
    <property type="match status" value="1"/>
</dbReference>
<dbReference type="HAMAP" id="MF_00042">
    <property type="entry name" value="RNase_H"/>
    <property type="match status" value="1"/>
</dbReference>
<dbReference type="InterPro" id="IPR050092">
    <property type="entry name" value="RNase_H"/>
</dbReference>
<dbReference type="InterPro" id="IPR012337">
    <property type="entry name" value="RNaseH-like_sf"/>
</dbReference>
<dbReference type="InterPro" id="IPR002156">
    <property type="entry name" value="RNaseH_domain"/>
</dbReference>
<dbReference type="InterPro" id="IPR036397">
    <property type="entry name" value="RNaseH_sf"/>
</dbReference>
<dbReference type="InterPro" id="IPR022892">
    <property type="entry name" value="RNaseHI"/>
</dbReference>
<dbReference type="NCBIfam" id="NF001236">
    <property type="entry name" value="PRK00203.1"/>
    <property type="match status" value="1"/>
</dbReference>
<dbReference type="PANTHER" id="PTHR10642">
    <property type="entry name" value="RIBONUCLEASE H1"/>
    <property type="match status" value="1"/>
</dbReference>
<dbReference type="PANTHER" id="PTHR10642:SF26">
    <property type="entry name" value="RIBONUCLEASE H1"/>
    <property type="match status" value="1"/>
</dbReference>
<dbReference type="Pfam" id="PF00075">
    <property type="entry name" value="RNase_H"/>
    <property type="match status" value="1"/>
</dbReference>
<dbReference type="SUPFAM" id="SSF53098">
    <property type="entry name" value="Ribonuclease H-like"/>
    <property type="match status" value="1"/>
</dbReference>
<dbReference type="PROSITE" id="PS50879">
    <property type="entry name" value="RNASE_H_1"/>
    <property type="match status" value="1"/>
</dbReference>
<keyword id="KW-0963">Cytoplasm</keyword>
<keyword id="KW-0255">Endonuclease</keyword>
<keyword id="KW-0378">Hydrolase</keyword>
<keyword id="KW-0460">Magnesium</keyword>
<keyword id="KW-0479">Metal-binding</keyword>
<keyword id="KW-0540">Nuclease</keyword>
<comment type="function">
    <text evidence="1">Endonuclease that specifically degrades the RNA of RNA-DNA hybrids.</text>
</comment>
<comment type="catalytic activity">
    <reaction evidence="1">
        <text>Endonucleolytic cleavage to 5'-phosphomonoester.</text>
        <dbReference type="EC" id="3.1.26.4"/>
    </reaction>
</comment>
<comment type="cofactor">
    <cofactor evidence="1">
        <name>Mg(2+)</name>
        <dbReference type="ChEBI" id="CHEBI:18420"/>
    </cofactor>
    <text evidence="1">Binds 1 Mg(2+) ion per subunit. May bind a second metal ion at a regulatory site, or after substrate binding.</text>
</comment>
<comment type="subunit">
    <text evidence="1">Monomer.</text>
</comment>
<comment type="subcellular location">
    <subcellularLocation>
        <location evidence="1">Cytoplasm</location>
    </subcellularLocation>
</comment>
<comment type="similarity">
    <text evidence="1">Belongs to the RNase H family.</text>
</comment>
<accession>B0T025</accession>
<name>RNH_CAUSK</name>
<feature type="chain" id="PRO_1000074638" description="Ribonuclease H">
    <location>
        <begin position="1"/>
        <end position="154"/>
    </location>
</feature>
<feature type="domain" description="RNase H type-1" evidence="2">
    <location>
        <begin position="1"/>
        <end position="142"/>
    </location>
</feature>
<feature type="binding site" evidence="1">
    <location>
        <position position="10"/>
    </location>
    <ligand>
        <name>Mg(2+)</name>
        <dbReference type="ChEBI" id="CHEBI:18420"/>
        <label>1</label>
    </ligand>
</feature>
<feature type="binding site" evidence="1">
    <location>
        <position position="10"/>
    </location>
    <ligand>
        <name>Mg(2+)</name>
        <dbReference type="ChEBI" id="CHEBI:18420"/>
        <label>2</label>
    </ligand>
</feature>
<feature type="binding site" evidence="1">
    <location>
        <position position="48"/>
    </location>
    <ligand>
        <name>Mg(2+)</name>
        <dbReference type="ChEBI" id="CHEBI:18420"/>
        <label>1</label>
    </ligand>
</feature>
<feature type="binding site" evidence="1">
    <location>
        <position position="70"/>
    </location>
    <ligand>
        <name>Mg(2+)</name>
        <dbReference type="ChEBI" id="CHEBI:18420"/>
        <label>1</label>
    </ligand>
</feature>
<feature type="binding site" evidence="1">
    <location>
        <position position="134"/>
    </location>
    <ligand>
        <name>Mg(2+)</name>
        <dbReference type="ChEBI" id="CHEBI:18420"/>
        <label>2</label>
    </ligand>
</feature>
<sequence>MTPKLVIYTDGACRGNPGPGGWGALLMYGDKKKEIMGGDLATTNNRMELMAAIQALEALNKPTKAELHTDSQYVMKGVTQWIHGWKAKGWKTADKSPVKNVDLWQRLDAARARHEVDWRWVKGHAGHVHNERADELARLGMLKTLGERGSGKAV</sequence>